<keyword id="KW-0233">DNA recombination</keyword>
<keyword id="KW-0238">DNA-binding</keyword>
<keyword id="KW-0804">Transcription</keyword>
<keyword id="KW-0805">Transcription regulation</keyword>
<keyword id="KW-0810">Translation regulation</keyword>
<organism>
    <name type="scientific">Salmonella paratyphi A (strain ATCC 9150 / SARB42)</name>
    <dbReference type="NCBI Taxonomy" id="295319"/>
    <lineage>
        <taxon>Bacteria</taxon>
        <taxon>Pseudomonadati</taxon>
        <taxon>Pseudomonadota</taxon>
        <taxon>Gammaproteobacteria</taxon>
        <taxon>Enterobacterales</taxon>
        <taxon>Enterobacteriaceae</taxon>
        <taxon>Salmonella</taxon>
    </lineage>
</organism>
<dbReference type="EMBL" id="CP000026">
    <property type="protein sequence ID" value="AAV77731.1"/>
    <property type="molecule type" value="Genomic_DNA"/>
</dbReference>
<dbReference type="RefSeq" id="WP_000167332.1">
    <property type="nucleotide sequence ID" value="NC_006511.1"/>
</dbReference>
<dbReference type="SMR" id="Q5PGG9"/>
<dbReference type="GeneID" id="84237116"/>
<dbReference type="KEGG" id="spt:SPA1816"/>
<dbReference type="HOGENOM" id="CLU_105066_2_0_6"/>
<dbReference type="Proteomes" id="UP000008185">
    <property type="component" value="Chromosome"/>
</dbReference>
<dbReference type="GO" id="GO:0005694">
    <property type="term" value="C:chromosome"/>
    <property type="evidence" value="ECO:0007669"/>
    <property type="project" value="InterPro"/>
</dbReference>
<dbReference type="GO" id="GO:0005829">
    <property type="term" value="C:cytosol"/>
    <property type="evidence" value="ECO:0007669"/>
    <property type="project" value="TreeGrafter"/>
</dbReference>
<dbReference type="GO" id="GO:0003677">
    <property type="term" value="F:DNA binding"/>
    <property type="evidence" value="ECO:0007669"/>
    <property type="project" value="UniProtKB-UniRule"/>
</dbReference>
<dbReference type="GO" id="GO:0030527">
    <property type="term" value="F:structural constituent of chromatin"/>
    <property type="evidence" value="ECO:0007669"/>
    <property type="project" value="InterPro"/>
</dbReference>
<dbReference type="GO" id="GO:0006310">
    <property type="term" value="P:DNA recombination"/>
    <property type="evidence" value="ECO:0007669"/>
    <property type="project" value="UniProtKB-UniRule"/>
</dbReference>
<dbReference type="GO" id="GO:0006355">
    <property type="term" value="P:regulation of DNA-templated transcription"/>
    <property type="evidence" value="ECO:0007669"/>
    <property type="project" value="UniProtKB-UniRule"/>
</dbReference>
<dbReference type="GO" id="GO:0006417">
    <property type="term" value="P:regulation of translation"/>
    <property type="evidence" value="ECO:0007669"/>
    <property type="project" value="UniProtKB-UniRule"/>
</dbReference>
<dbReference type="CDD" id="cd13836">
    <property type="entry name" value="IHF_B"/>
    <property type="match status" value="1"/>
</dbReference>
<dbReference type="FunFam" id="4.10.520.10:FF:000003">
    <property type="entry name" value="Integration host factor subunit beta"/>
    <property type="match status" value="1"/>
</dbReference>
<dbReference type="Gene3D" id="4.10.520.10">
    <property type="entry name" value="IHF-like DNA-binding proteins"/>
    <property type="match status" value="1"/>
</dbReference>
<dbReference type="HAMAP" id="MF_00381">
    <property type="entry name" value="IHF_beta"/>
    <property type="match status" value="1"/>
</dbReference>
<dbReference type="InterPro" id="IPR000119">
    <property type="entry name" value="Hist_DNA-bd"/>
</dbReference>
<dbReference type="InterPro" id="IPR020816">
    <property type="entry name" value="Histone-like_DNA-bd_CS"/>
</dbReference>
<dbReference type="InterPro" id="IPR010992">
    <property type="entry name" value="IHF-like_DNA-bd_dom_sf"/>
</dbReference>
<dbReference type="InterPro" id="IPR005685">
    <property type="entry name" value="IHF_beta"/>
</dbReference>
<dbReference type="NCBIfam" id="TIGR00988">
    <property type="entry name" value="hip"/>
    <property type="match status" value="1"/>
</dbReference>
<dbReference type="NCBIfam" id="NF001222">
    <property type="entry name" value="PRK00199.1"/>
    <property type="match status" value="1"/>
</dbReference>
<dbReference type="PANTHER" id="PTHR33175">
    <property type="entry name" value="DNA-BINDING PROTEIN HU"/>
    <property type="match status" value="1"/>
</dbReference>
<dbReference type="PANTHER" id="PTHR33175:SF5">
    <property type="entry name" value="INTEGRATION HOST FACTOR SUBUNIT BETA"/>
    <property type="match status" value="1"/>
</dbReference>
<dbReference type="Pfam" id="PF00216">
    <property type="entry name" value="Bac_DNA_binding"/>
    <property type="match status" value="1"/>
</dbReference>
<dbReference type="PRINTS" id="PR01727">
    <property type="entry name" value="DNABINDINGHU"/>
</dbReference>
<dbReference type="SMART" id="SM00411">
    <property type="entry name" value="BHL"/>
    <property type="match status" value="1"/>
</dbReference>
<dbReference type="SUPFAM" id="SSF47729">
    <property type="entry name" value="IHF-like DNA-binding proteins"/>
    <property type="match status" value="1"/>
</dbReference>
<dbReference type="PROSITE" id="PS00045">
    <property type="entry name" value="HISTONE_LIKE"/>
    <property type="match status" value="1"/>
</dbReference>
<accession>Q5PGG9</accession>
<sequence>MTKSELIERLATQQSHIPAKAVEDAVKEMLEHMASTLAQGERIEIRGFGSFSLHYRAPRTGRNPKTGDKVELEGKYVPHFKPGKELRDRANIYG</sequence>
<name>IHFB_SALPA</name>
<comment type="function">
    <text evidence="1">This protein is one of the two subunits of integration host factor, a specific DNA-binding protein that functions in genetic recombination as well as in transcriptional and translational control.</text>
</comment>
<comment type="subunit">
    <text evidence="1">Heterodimer of an alpha and a beta chain.</text>
</comment>
<comment type="similarity">
    <text evidence="1">Belongs to the bacterial histone-like protein family.</text>
</comment>
<reference key="1">
    <citation type="journal article" date="2004" name="Nat. Genet.">
        <title>Comparison of genome degradation in Paratyphi A and Typhi, human-restricted serovars of Salmonella enterica that cause typhoid.</title>
        <authorList>
            <person name="McClelland M."/>
            <person name="Sanderson K.E."/>
            <person name="Clifton S.W."/>
            <person name="Latreille P."/>
            <person name="Porwollik S."/>
            <person name="Sabo A."/>
            <person name="Meyer R."/>
            <person name="Bieri T."/>
            <person name="Ozersky P."/>
            <person name="McLellan M."/>
            <person name="Harkins C.R."/>
            <person name="Wang C."/>
            <person name="Nguyen C."/>
            <person name="Berghoff A."/>
            <person name="Elliott G."/>
            <person name="Kohlberg S."/>
            <person name="Strong C."/>
            <person name="Du F."/>
            <person name="Carter J."/>
            <person name="Kremizki C."/>
            <person name="Layman D."/>
            <person name="Leonard S."/>
            <person name="Sun H."/>
            <person name="Fulton L."/>
            <person name="Nash W."/>
            <person name="Miner T."/>
            <person name="Minx P."/>
            <person name="Delehaunty K."/>
            <person name="Fronick C."/>
            <person name="Magrini V."/>
            <person name="Nhan M."/>
            <person name="Warren W."/>
            <person name="Florea L."/>
            <person name="Spieth J."/>
            <person name="Wilson R.K."/>
        </authorList>
    </citation>
    <scope>NUCLEOTIDE SEQUENCE [LARGE SCALE GENOMIC DNA]</scope>
    <source>
        <strain>ATCC 9150 / SARB42</strain>
    </source>
</reference>
<feature type="chain" id="PRO_1000060651" description="Integration host factor subunit beta">
    <location>
        <begin position="1"/>
        <end position="94"/>
    </location>
</feature>
<evidence type="ECO:0000255" key="1">
    <source>
        <dbReference type="HAMAP-Rule" id="MF_00381"/>
    </source>
</evidence>
<proteinExistence type="inferred from homology"/>
<gene>
    <name evidence="1" type="primary">ihfB</name>
    <name evidence="1" type="synonym">himD</name>
    <name type="ordered locus">SPA1816</name>
</gene>
<protein>
    <recommendedName>
        <fullName evidence="1">Integration host factor subunit beta</fullName>
        <shortName evidence="1">IHF-beta</shortName>
    </recommendedName>
</protein>